<dbReference type="EMBL" id="CP000687">
    <property type="protein sequence ID" value="ABY68909.1"/>
    <property type="molecule type" value="Genomic_DNA"/>
</dbReference>
<dbReference type="RefSeq" id="WP_012262771.1">
    <property type="nucleotide sequence ID" value="NC_010278.1"/>
</dbReference>
<dbReference type="SMR" id="B0BT52"/>
<dbReference type="KEGG" id="apj:APJL_0316"/>
<dbReference type="HOGENOM" id="CLU_047123_0_0_6"/>
<dbReference type="Proteomes" id="UP000008547">
    <property type="component" value="Chromosome"/>
</dbReference>
<dbReference type="GO" id="GO:0042597">
    <property type="term" value="C:periplasmic space"/>
    <property type="evidence" value="ECO:0007669"/>
    <property type="project" value="UniProtKB-SubCell"/>
</dbReference>
<dbReference type="GO" id="GO:0051301">
    <property type="term" value="P:cell division"/>
    <property type="evidence" value="ECO:0007669"/>
    <property type="project" value="UniProtKB-UniRule"/>
</dbReference>
<dbReference type="GO" id="GO:0017038">
    <property type="term" value="P:protein import"/>
    <property type="evidence" value="ECO:0007669"/>
    <property type="project" value="InterPro"/>
</dbReference>
<dbReference type="Gene3D" id="2.120.10.30">
    <property type="entry name" value="TolB, C-terminal domain"/>
    <property type="match status" value="1"/>
</dbReference>
<dbReference type="Gene3D" id="3.40.50.10070">
    <property type="entry name" value="TolB, N-terminal domain"/>
    <property type="match status" value="1"/>
</dbReference>
<dbReference type="HAMAP" id="MF_00671">
    <property type="entry name" value="TolB"/>
    <property type="match status" value="1"/>
</dbReference>
<dbReference type="InterPro" id="IPR011042">
    <property type="entry name" value="6-blade_b-propeller_TolB-like"/>
</dbReference>
<dbReference type="InterPro" id="IPR011659">
    <property type="entry name" value="PD40"/>
</dbReference>
<dbReference type="InterPro" id="IPR014167">
    <property type="entry name" value="Tol-Pal_TolB"/>
</dbReference>
<dbReference type="InterPro" id="IPR007195">
    <property type="entry name" value="TolB_N"/>
</dbReference>
<dbReference type="NCBIfam" id="TIGR02800">
    <property type="entry name" value="propeller_TolB"/>
    <property type="match status" value="1"/>
</dbReference>
<dbReference type="PANTHER" id="PTHR36842:SF1">
    <property type="entry name" value="PROTEIN TOLB"/>
    <property type="match status" value="1"/>
</dbReference>
<dbReference type="PANTHER" id="PTHR36842">
    <property type="entry name" value="PROTEIN TOLB HOMOLOG"/>
    <property type="match status" value="1"/>
</dbReference>
<dbReference type="Pfam" id="PF07676">
    <property type="entry name" value="PD40"/>
    <property type="match status" value="4"/>
</dbReference>
<dbReference type="Pfam" id="PF04052">
    <property type="entry name" value="TolB_N"/>
    <property type="match status" value="1"/>
</dbReference>
<dbReference type="SUPFAM" id="SSF52964">
    <property type="entry name" value="TolB, N-terminal domain"/>
    <property type="match status" value="1"/>
</dbReference>
<dbReference type="SUPFAM" id="SSF69304">
    <property type="entry name" value="Tricorn protease N-terminal domain"/>
    <property type="match status" value="1"/>
</dbReference>
<gene>
    <name evidence="1" type="primary">tolB</name>
    <name type="ordered locus">APJL_0316</name>
</gene>
<organism>
    <name type="scientific">Actinobacillus pleuropneumoniae serotype 3 (strain JL03)</name>
    <dbReference type="NCBI Taxonomy" id="434271"/>
    <lineage>
        <taxon>Bacteria</taxon>
        <taxon>Pseudomonadati</taxon>
        <taxon>Pseudomonadota</taxon>
        <taxon>Gammaproteobacteria</taxon>
        <taxon>Pasteurellales</taxon>
        <taxon>Pasteurellaceae</taxon>
        <taxon>Actinobacillus</taxon>
    </lineage>
</organism>
<keyword id="KW-0131">Cell cycle</keyword>
<keyword id="KW-0132">Cell division</keyword>
<keyword id="KW-0574">Periplasm</keyword>
<keyword id="KW-0732">Signal</keyword>
<accession>B0BT52</accession>
<evidence type="ECO:0000255" key="1">
    <source>
        <dbReference type="HAMAP-Rule" id="MF_00671"/>
    </source>
</evidence>
<proteinExistence type="inferred from homology"/>
<name>TOLB_ACTPJ</name>
<feature type="signal peptide" evidence="1">
    <location>
        <begin position="1"/>
        <end position="24"/>
    </location>
</feature>
<feature type="chain" id="PRO_1000131515" description="Tol-Pal system protein TolB" evidence="1">
    <location>
        <begin position="25"/>
        <end position="426"/>
    </location>
</feature>
<comment type="function">
    <text evidence="1">Part of the Tol-Pal system, which plays a role in outer membrane invagination during cell division and is important for maintaining outer membrane integrity.</text>
</comment>
<comment type="subunit">
    <text evidence="1">The Tol-Pal system is composed of five core proteins: the inner membrane proteins TolA, TolQ and TolR, the periplasmic protein TolB and the outer membrane protein Pal. They form a network linking the inner and outer membranes and the peptidoglycan layer.</text>
</comment>
<comment type="subcellular location">
    <subcellularLocation>
        <location evidence="1">Periplasm</location>
    </subcellularLocation>
</comment>
<comment type="similarity">
    <text evidence="1">Belongs to the TolB family.</text>
</comment>
<reference key="1">
    <citation type="journal article" date="2008" name="PLoS ONE">
        <title>Genome biology of Actinobacillus pleuropneumoniae JL03, an isolate of serotype 3 prevalent in China.</title>
        <authorList>
            <person name="Xu Z."/>
            <person name="Zhou Y."/>
            <person name="Li L."/>
            <person name="Zhou R."/>
            <person name="Xiao S."/>
            <person name="Wan Y."/>
            <person name="Zhang S."/>
            <person name="Wang K."/>
            <person name="Li W."/>
            <person name="Li L."/>
            <person name="Jin H."/>
            <person name="Kang M."/>
            <person name="Dalai B."/>
            <person name="Li T."/>
            <person name="Liu L."/>
            <person name="Cheng Y."/>
            <person name="Zhang L."/>
            <person name="Xu T."/>
            <person name="Zheng H."/>
            <person name="Pu S."/>
            <person name="Wang B."/>
            <person name="Gu W."/>
            <person name="Zhang X.L."/>
            <person name="Zhu G.-F."/>
            <person name="Wang S."/>
            <person name="Zhao G.-P."/>
            <person name="Chen H."/>
        </authorList>
    </citation>
    <scope>NUCLEOTIDE SEQUENCE [LARGE SCALE GENOMIC DNA]</scope>
    <source>
        <strain>JL03</strain>
    </source>
</reference>
<sequence length="426" mass="44821">MKLKSRFTSIIGVITLFFSQTVTAESDVVISVDEGVSMAQPIAVVPFKANGGVPADVGQIIADDLRNSGKFTPVERSKLPAQPGSAAEVNSQQWTDIGVDSVVVGQVTPTGGGYNVAYQLVDTLSNPATVLAQGAFNVPAAQIRQGAHTVSDQVFEKITQIRGAFRTKIAYVVQRGVSSYELRVSDYDGYNAFTVVKSKEPLMSPEWSPDGSRLAYVTFENKKAQVVVHDLRSGSRRVVAALRGHNGAPAFSPDGSRIAFASNQDGELDIYVVGANGGKPSKLTANAGNNTEPSWSPDGSTIYFTSDRAGSPQVYRMGLSGGGASPMGGSGSYNAKVSSDGKNLIMIAGDKVVKRDLASGGTEVLSSTFLDESPSISPNGIMVIYSSTKGTSKVLQLVSADGRFKANLPGAGGQFKFPAWSPYLTK</sequence>
<protein>
    <recommendedName>
        <fullName evidence="1">Tol-Pal system protein TolB</fullName>
    </recommendedName>
</protein>